<organism>
    <name type="scientific">Vibrio cholerae serotype O1 (strain ATCC 39315 / El Tor Inaba N16961)</name>
    <dbReference type="NCBI Taxonomy" id="243277"/>
    <lineage>
        <taxon>Bacteria</taxon>
        <taxon>Pseudomonadati</taxon>
        <taxon>Pseudomonadota</taxon>
        <taxon>Gammaproteobacteria</taxon>
        <taxon>Vibrionales</taxon>
        <taxon>Vibrionaceae</taxon>
        <taxon>Vibrio</taxon>
    </lineage>
</organism>
<protein>
    <recommendedName>
        <fullName evidence="1">2-isopropylmalate synthase</fullName>
        <ecNumber evidence="1">2.3.3.13</ecNumber>
    </recommendedName>
    <alternativeName>
        <fullName evidence="1">Alpha-IPM synthase</fullName>
    </alternativeName>
    <alternativeName>
        <fullName evidence="1">Alpha-isopropylmalate synthase</fullName>
    </alternativeName>
</protein>
<sequence>MNNQVIIFDTTLRDGEQALSASLTVKEKLQIAYALERLGVDIIEAGFPVSSPGDFESVQTIAKNIKNSRVCALSRAVAKDIDAAAEALKVAEAFRIHTFISTSTIHVQDKLRRSYDDVVAMAVKAVKHARQYTDDVEFSCEDAGRTPIDNLCRMVEAAINAGARTINIPDTVGYTVPSEFGGIIQTLFNRVPNIDKAIISVHCHDDLGMSVANSIAAIQAGARQVEGTINGIGERAGNCALEEIAMIIKTRQELLGVTTGIKHDEISRTSKLVSQLCNMPIQSNKAIVGANAFSHSSGIHQDGMLKNKNTYEIMTPESIGLKNQALNLTSRSGRAAVKSHMDSMGYNENEYNLDALYEDFLKLADRKGQVFDYDLEALMHFSNLREEDDFYKLNYLSVQSGSVMATTSIKLLCGGEEKCEAAVGNGPVDALYQCIYRITGYEIVLDKFDLTAKGEGEDGLGQADIIANYKGRKYHGTGVSTDIVEASGQALLHVINSIHRADQIAQIKQKKSVATV</sequence>
<accession>Q9KP83</accession>
<comment type="function">
    <text evidence="1">Catalyzes the condensation of the acetyl group of acetyl-CoA with 3-methyl-2-oxobutanoate (2-ketoisovalerate) to form 3-carboxy-3-hydroxy-4-methylpentanoate (2-isopropylmalate).</text>
</comment>
<comment type="catalytic activity">
    <reaction evidence="1">
        <text>3-methyl-2-oxobutanoate + acetyl-CoA + H2O = (2S)-2-isopropylmalate + CoA + H(+)</text>
        <dbReference type="Rhea" id="RHEA:21524"/>
        <dbReference type="ChEBI" id="CHEBI:1178"/>
        <dbReference type="ChEBI" id="CHEBI:11851"/>
        <dbReference type="ChEBI" id="CHEBI:15377"/>
        <dbReference type="ChEBI" id="CHEBI:15378"/>
        <dbReference type="ChEBI" id="CHEBI:57287"/>
        <dbReference type="ChEBI" id="CHEBI:57288"/>
        <dbReference type="EC" id="2.3.3.13"/>
    </reaction>
</comment>
<comment type="cofactor">
    <cofactor evidence="1">
        <name>Mn(2+)</name>
        <dbReference type="ChEBI" id="CHEBI:29035"/>
    </cofactor>
</comment>
<comment type="pathway">
    <text evidence="1">Amino-acid biosynthesis; L-leucine biosynthesis; L-leucine from 3-methyl-2-oxobutanoate: step 1/4.</text>
</comment>
<comment type="subunit">
    <text evidence="1">Homodimer.</text>
</comment>
<comment type="subcellular location">
    <subcellularLocation>
        <location evidence="1">Cytoplasm</location>
    </subcellularLocation>
</comment>
<comment type="similarity">
    <text evidence="1">Belongs to the alpha-IPM synthase/homocitrate synthase family. LeuA type 1 subfamily.</text>
</comment>
<dbReference type="EC" id="2.3.3.13" evidence="1"/>
<dbReference type="EMBL" id="AE003852">
    <property type="protein sequence ID" value="AAF95632.1"/>
    <property type="molecule type" value="Genomic_DNA"/>
</dbReference>
<dbReference type="PIR" id="F82070">
    <property type="entry name" value="F82070"/>
</dbReference>
<dbReference type="RefSeq" id="NP_232119.1">
    <property type="nucleotide sequence ID" value="NC_002505.1"/>
</dbReference>
<dbReference type="RefSeq" id="WP_001064847.1">
    <property type="nucleotide sequence ID" value="NZ_LT906614.1"/>
</dbReference>
<dbReference type="SMR" id="Q9KP83"/>
<dbReference type="STRING" id="243277.VC_2490"/>
<dbReference type="DNASU" id="2615147"/>
<dbReference type="EnsemblBacteria" id="AAF95632">
    <property type="protein sequence ID" value="AAF95632"/>
    <property type="gene ID" value="VC_2490"/>
</dbReference>
<dbReference type="KEGG" id="vch:VC_2490"/>
<dbReference type="PATRIC" id="fig|243277.26.peg.2372"/>
<dbReference type="eggNOG" id="COG0119">
    <property type="taxonomic scope" value="Bacteria"/>
</dbReference>
<dbReference type="HOGENOM" id="CLU_022158_0_1_6"/>
<dbReference type="UniPathway" id="UPA00048">
    <property type="reaction ID" value="UER00070"/>
</dbReference>
<dbReference type="Proteomes" id="UP000000584">
    <property type="component" value="Chromosome 1"/>
</dbReference>
<dbReference type="GO" id="GO:0005829">
    <property type="term" value="C:cytosol"/>
    <property type="evidence" value="ECO:0000318"/>
    <property type="project" value="GO_Central"/>
</dbReference>
<dbReference type="GO" id="GO:0003852">
    <property type="term" value="F:2-isopropylmalate synthase activity"/>
    <property type="evidence" value="ECO:0000318"/>
    <property type="project" value="GO_Central"/>
</dbReference>
<dbReference type="GO" id="GO:0003985">
    <property type="term" value="F:acetyl-CoA C-acetyltransferase activity"/>
    <property type="evidence" value="ECO:0007669"/>
    <property type="project" value="UniProtKB-UniRule"/>
</dbReference>
<dbReference type="GO" id="GO:0030145">
    <property type="term" value="F:manganese ion binding"/>
    <property type="evidence" value="ECO:0007669"/>
    <property type="project" value="UniProtKB-UniRule"/>
</dbReference>
<dbReference type="GO" id="GO:0009098">
    <property type="term" value="P:L-leucine biosynthetic process"/>
    <property type="evidence" value="ECO:0000318"/>
    <property type="project" value="GO_Central"/>
</dbReference>
<dbReference type="CDD" id="cd07940">
    <property type="entry name" value="DRE_TIM_IPMS"/>
    <property type="match status" value="1"/>
</dbReference>
<dbReference type="FunFam" id="1.10.238.260:FF:000001">
    <property type="entry name" value="2-isopropylmalate synthase"/>
    <property type="match status" value="1"/>
</dbReference>
<dbReference type="FunFam" id="3.20.20.70:FF:000010">
    <property type="entry name" value="2-isopropylmalate synthase"/>
    <property type="match status" value="1"/>
</dbReference>
<dbReference type="FunFam" id="3.30.160.270:FF:000001">
    <property type="entry name" value="2-isopropylmalate synthase"/>
    <property type="match status" value="1"/>
</dbReference>
<dbReference type="Gene3D" id="1.10.238.260">
    <property type="match status" value="1"/>
</dbReference>
<dbReference type="Gene3D" id="3.30.160.270">
    <property type="match status" value="1"/>
</dbReference>
<dbReference type="Gene3D" id="3.20.20.70">
    <property type="entry name" value="Aldolase class I"/>
    <property type="match status" value="1"/>
</dbReference>
<dbReference type="HAMAP" id="MF_01025">
    <property type="entry name" value="LeuA_type1"/>
    <property type="match status" value="1"/>
</dbReference>
<dbReference type="InterPro" id="IPR050073">
    <property type="entry name" value="2-IPM_HCS-like"/>
</dbReference>
<dbReference type="InterPro" id="IPR013709">
    <property type="entry name" value="2-isopropylmalate_synth_dimer"/>
</dbReference>
<dbReference type="InterPro" id="IPR002034">
    <property type="entry name" value="AIPM/Hcit_synth_CS"/>
</dbReference>
<dbReference type="InterPro" id="IPR013785">
    <property type="entry name" value="Aldolase_TIM"/>
</dbReference>
<dbReference type="InterPro" id="IPR054691">
    <property type="entry name" value="LeuA/HCS_post-cat"/>
</dbReference>
<dbReference type="InterPro" id="IPR036230">
    <property type="entry name" value="LeuA_allosteric_dom_sf"/>
</dbReference>
<dbReference type="InterPro" id="IPR005671">
    <property type="entry name" value="LeuA_bact_synth"/>
</dbReference>
<dbReference type="InterPro" id="IPR000891">
    <property type="entry name" value="PYR_CT"/>
</dbReference>
<dbReference type="NCBIfam" id="TIGR00973">
    <property type="entry name" value="leuA_bact"/>
    <property type="match status" value="1"/>
</dbReference>
<dbReference type="NCBIfam" id="NF002084">
    <property type="entry name" value="PRK00915.1-1"/>
    <property type="match status" value="1"/>
</dbReference>
<dbReference type="NCBIfam" id="NF002086">
    <property type="entry name" value="PRK00915.1-3"/>
    <property type="match status" value="1"/>
</dbReference>
<dbReference type="PANTHER" id="PTHR10277:SF9">
    <property type="entry name" value="2-ISOPROPYLMALATE SYNTHASE 1, CHLOROPLASTIC-RELATED"/>
    <property type="match status" value="1"/>
</dbReference>
<dbReference type="PANTHER" id="PTHR10277">
    <property type="entry name" value="HOMOCITRATE SYNTHASE-RELATED"/>
    <property type="match status" value="1"/>
</dbReference>
<dbReference type="Pfam" id="PF22617">
    <property type="entry name" value="HCS_D2"/>
    <property type="match status" value="1"/>
</dbReference>
<dbReference type="Pfam" id="PF00682">
    <property type="entry name" value="HMGL-like"/>
    <property type="match status" value="1"/>
</dbReference>
<dbReference type="Pfam" id="PF08502">
    <property type="entry name" value="LeuA_dimer"/>
    <property type="match status" value="1"/>
</dbReference>
<dbReference type="SMART" id="SM00917">
    <property type="entry name" value="LeuA_dimer"/>
    <property type="match status" value="1"/>
</dbReference>
<dbReference type="SUPFAM" id="SSF110921">
    <property type="entry name" value="2-isopropylmalate synthase LeuA, allosteric (dimerisation) domain"/>
    <property type="match status" value="1"/>
</dbReference>
<dbReference type="SUPFAM" id="SSF51569">
    <property type="entry name" value="Aldolase"/>
    <property type="match status" value="1"/>
</dbReference>
<dbReference type="PROSITE" id="PS00815">
    <property type="entry name" value="AIPM_HOMOCIT_SYNTH_1"/>
    <property type="match status" value="1"/>
</dbReference>
<dbReference type="PROSITE" id="PS00816">
    <property type="entry name" value="AIPM_HOMOCIT_SYNTH_2"/>
    <property type="match status" value="1"/>
</dbReference>
<dbReference type="PROSITE" id="PS50991">
    <property type="entry name" value="PYR_CT"/>
    <property type="match status" value="1"/>
</dbReference>
<evidence type="ECO:0000255" key="1">
    <source>
        <dbReference type="HAMAP-Rule" id="MF_01025"/>
    </source>
</evidence>
<reference key="1">
    <citation type="journal article" date="2000" name="Nature">
        <title>DNA sequence of both chromosomes of the cholera pathogen Vibrio cholerae.</title>
        <authorList>
            <person name="Heidelberg J.F."/>
            <person name="Eisen J.A."/>
            <person name="Nelson W.C."/>
            <person name="Clayton R.A."/>
            <person name="Gwinn M.L."/>
            <person name="Dodson R.J."/>
            <person name="Haft D.H."/>
            <person name="Hickey E.K."/>
            <person name="Peterson J.D."/>
            <person name="Umayam L.A."/>
            <person name="Gill S.R."/>
            <person name="Nelson K.E."/>
            <person name="Read T.D."/>
            <person name="Tettelin H."/>
            <person name="Richardson D.L."/>
            <person name="Ermolaeva M.D."/>
            <person name="Vamathevan J.J."/>
            <person name="Bass S."/>
            <person name="Qin H."/>
            <person name="Dragoi I."/>
            <person name="Sellers P."/>
            <person name="McDonald L.A."/>
            <person name="Utterback T.R."/>
            <person name="Fleischmann R.D."/>
            <person name="Nierman W.C."/>
            <person name="White O."/>
            <person name="Salzberg S.L."/>
            <person name="Smith H.O."/>
            <person name="Colwell R.R."/>
            <person name="Mekalanos J.J."/>
            <person name="Venter J.C."/>
            <person name="Fraser C.M."/>
        </authorList>
    </citation>
    <scope>NUCLEOTIDE SEQUENCE [LARGE SCALE GENOMIC DNA]</scope>
    <source>
        <strain>ATCC 39315 / El Tor Inaba N16961</strain>
    </source>
</reference>
<proteinExistence type="inferred from homology"/>
<keyword id="KW-0028">Amino-acid biosynthesis</keyword>
<keyword id="KW-0100">Branched-chain amino acid biosynthesis</keyword>
<keyword id="KW-0963">Cytoplasm</keyword>
<keyword id="KW-0432">Leucine biosynthesis</keyword>
<keyword id="KW-0464">Manganese</keyword>
<keyword id="KW-0479">Metal-binding</keyword>
<keyword id="KW-1185">Reference proteome</keyword>
<keyword id="KW-0808">Transferase</keyword>
<name>LEU1_VIBCH</name>
<gene>
    <name evidence="1" type="primary">leuA</name>
    <name type="ordered locus">VC_2490</name>
</gene>
<feature type="chain" id="PRO_0000140395" description="2-isopropylmalate synthase">
    <location>
        <begin position="1"/>
        <end position="516"/>
    </location>
</feature>
<feature type="domain" description="Pyruvate carboxyltransferase" evidence="1">
    <location>
        <begin position="5"/>
        <end position="267"/>
    </location>
</feature>
<feature type="region of interest" description="Regulatory domain" evidence="1">
    <location>
        <begin position="392"/>
        <end position="516"/>
    </location>
</feature>
<feature type="binding site" evidence="1">
    <location>
        <position position="14"/>
    </location>
    <ligand>
        <name>Mn(2+)</name>
        <dbReference type="ChEBI" id="CHEBI:29035"/>
    </ligand>
</feature>
<feature type="binding site" evidence="1">
    <location>
        <position position="202"/>
    </location>
    <ligand>
        <name>Mn(2+)</name>
        <dbReference type="ChEBI" id="CHEBI:29035"/>
    </ligand>
</feature>
<feature type="binding site" evidence="1">
    <location>
        <position position="204"/>
    </location>
    <ligand>
        <name>Mn(2+)</name>
        <dbReference type="ChEBI" id="CHEBI:29035"/>
    </ligand>
</feature>
<feature type="binding site" evidence="1">
    <location>
        <position position="238"/>
    </location>
    <ligand>
        <name>Mn(2+)</name>
        <dbReference type="ChEBI" id="CHEBI:29035"/>
    </ligand>
</feature>